<evidence type="ECO:0000255" key="1">
    <source>
        <dbReference type="HAMAP-Rule" id="MF_00291"/>
    </source>
</evidence>
<evidence type="ECO:0000305" key="2"/>
<organism>
    <name type="scientific">Pyrobaculum islandicum (strain DSM 4184 / JCM 9189 / GEO3)</name>
    <dbReference type="NCBI Taxonomy" id="384616"/>
    <lineage>
        <taxon>Archaea</taxon>
        <taxon>Thermoproteota</taxon>
        <taxon>Thermoprotei</taxon>
        <taxon>Thermoproteales</taxon>
        <taxon>Thermoproteaceae</taxon>
        <taxon>Pyrobaculum</taxon>
    </lineage>
</organism>
<dbReference type="EMBL" id="CP000504">
    <property type="protein sequence ID" value="ABL88275.1"/>
    <property type="molecule type" value="Genomic_DNA"/>
</dbReference>
<dbReference type="RefSeq" id="WP_011762850.1">
    <property type="nucleotide sequence ID" value="NC_008701.1"/>
</dbReference>
<dbReference type="SMR" id="A1RTJ3"/>
<dbReference type="STRING" id="384616.Pisl_1104"/>
<dbReference type="GeneID" id="4617637"/>
<dbReference type="KEGG" id="pis:Pisl_1104"/>
<dbReference type="eggNOG" id="arCOG04245">
    <property type="taxonomic scope" value="Archaea"/>
</dbReference>
<dbReference type="HOGENOM" id="CLU_058171_3_0_2"/>
<dbReference type="OrthoDB" id="371797at2157"/>
<dbReference type="Proteomes" id="UP000002595">
    <property type="component" value="Chromosome"/>
</dbReference>
<dbReference type="GO" id="GO:0015935">
    <property type="term" value="C:small ribosomal subunit"/>
    <property type="evidence" value="ECO:0007669"/>
    <property type="project" value="InterPro"/>
</dbReference>
<dbReference type="GO" id="GO:0003735">
    <property type="term" value="F:structural constituent of ribosome"/>
    <property type="evidence" value="ECO:0007669"/>
    <property type="project" value="InterPro"/>
</dbReference>
<dbReference type="GO" id="GO:0006412">
    <property type="term" value="P:translation"/>
    <property type="evidence" value="ECO:0007669"/>
    <property type="project" value="UniProtKB-UniRule"/>
</dbReference>
<dbReference type="CDD" id="cd01425">
    <property type="entry name" value="RPS2"/>
    <property type="match status" value="1"/>
</dbReference>
<dbReference type="FunFam" id="3.40.50.10490:FF:000030">
    <property type="entry name" value="30S ribosomal protein S2"/>
    <property type="match status" value="1"/>
</dbReference>
<dbReference type="Gene3D" id="3.40.50.10490">
    <property type="entry name" value="Glucose-6-phosphate isomerase like protein, domain 1"/>
    <property type="match status" value="1"/>
</dbReference>
<dbReference type="HAMAP" id="MF_00291_A">
    <property type="entry name" value="Ribosomal_uS2_A"/>
    <property type="match status" value="1"/>
</dbReference>
<dbReference type="InterPro" id="IPR001865">
    <property type="entry name" value="Ribosomal_uS2"/>
</dbReference>
<dbReference type="InterPro" id="IPR023454">
    <property type="entry name" value="Ribosomal_uS2_arc"/>
</dbReference>
<dbReference type="InterPro" id="IPR005707">
    <property type="entry name" value="Ribosomal_uS2_euk/arc"/>
</dbReference>
<dbReference type="InterPro" id="IPR023591">
    <property type="entry name" value="Ribosomal_uS2_flav_dom_sf"/>
</dbReference>
<dbReference type="NCBIfam" id="TIGR01012">
    <property type="entry name" value="uS2_euk_arch"/>
    <property type="match status" value="1"/>
</dbReference>
<dbReference type="PANTHER" id="PTHR11489">
    <property type="entry name" value="40S RIBOSOMAL PROTEIN SA"/>
    <property type="match status" value="1"/>
</dbReference>
<dbReference type="Pfam" id="PF00318">
    <property type="entry name" value="Ribosomal_S2"/>
    <property type="match status" value="1"/>
</dbReference>
<dbReference type="PRINTS" id="PR00395">
    <property type="entry name" value="RIBOSOMALS2"/>
</dbReference>
<dbReference type="SUPFAM" id="SSF52313">
    <property type="entry name" value="Ribosomal protein S2"/>
    <property type="match status" value="1"/>
</dbReference>
<accession>A1RTJ3</accession>
<name>RS2_PYRIL</name>
<feature type="chain" id="PRO_0000352079" description="Small ribosomal subunit protein uS2">
    <location>
        <begin position="1"/>
        <end position="207"/>
    </location>
</feature>
<reference key="1">
    <citation type="submission" date="2006-12" db="EMBL/GenBank/DDBJ databases">
        <title>Complete sequence of Pyrobaculum islandicum DSM 4184.</title>
        <authorList>
            <person name="Copeland A."/>
            <person name="Lucas S."/>
            <person name="Lapidus A."/>
            <person name="Barry K."/>
            <person name="Detter J.C."/>
            <person name="Glavina del Rio T."/>
            <person name="Dalin E."/>
            <person name="Tice H."/>
            <person name="Pitluck S."/>
            <person name="Meincke L."/>
            <person name="Brettin T."/>
            <person name="Bruce D."/>
            <person name="Han C."/>
            <person name="Tapia R."/>
            <person name="Gilna P."/>
            <person name="Schmutz J."/>
            <person name="Larimer F."/>
            <person name="Land M."/>
            <person name="Hauser L."/>
            <person name="Kyrpides N."/>
            <person name="Mikhailova N."/>
            <person name="Cozen A.E."/>
            <person name="Fitz-Gibbon S.T."/>
            <person name="House C.H."/>
            <person name="Saltikov C."/>
            <person name="Lowe T."/>
            <person name="Richardson P."/>
        </authorList>
    </citation>
    <scope>NUCLEOTIDE SEQUENCE [LARGE SCALE GENOMIC DNA]</scope>
    <source>
        <strain>DSM 4184 / JCM 9189 / GEO3</strain>
    </source>
</reference>
<protein>
    <recommendedName>
        <fullName evidence="1">Small ribosomal subunit protein uS2</fullName>
    </recommendedName>
    <alternativeName>
        <fullName evidence="2">30S ribosomal protein S2</fullName>
    </alternativeName>
</protein>
<sequence>MSEETQYEYLVPLEKYLSAGVRLGTRLSNKYLEERGFIYAVRPDGLRIFDIKKIDERLRIAAKFISRYQPDRILVHTTRPYGFKPVQMFCKFVGCRALTGRFIPGTLTNPYLPNYTEIDLLFVVDPKLDAQAVAEAAKMGIPIIALVDTDTPHQYIDFMIPCNNKGRRSLALIFWILARQVLRERGELKPDQDLPVPPEEFETRLIQ</sequence>
<comment type="similarity">
    <text evidence="1">Belongs to the universal ribosomal protein uS2 family.</text>
</comment>
<gene>
    <name evidence="1" type="primary">rps2</name>
    <name type="ordered locus">Pisl_1104</name>
</gene>
<keyword id="KW-0687">Ribonucleoprotein</keyword>
<keyword id="KW-0689">Ribosomal protein</keyword>
<proteinExistence type="inferred from homology"/>